<sequence length="86" mass="10271">MAEKRKYSRKYCKYTEAKVEFIDYKDTAMLKHALSERFKIMPRRLTGTSKKYQEMVEVAIKRARHVALIPYIVDRKEVINNPFEGL</sequence>
<comment type="function">
    <text evidence="1">Binds as a heterodimer with protein bS6 to the central domain of the 16S rRNA, where it helps stabilize the platform of the 30S subunit.</text>
</comment>
<comment type="subunit">
    <text evidence="1">Part of the 30S ribosomal subunit. Forms a tight heterodimer with protein bS6.</text>
</comment>
<comment type="similarity">
    <text evidence="1">Belongs to the bacterial ribosomal protein bS18 family.</text>
</comment>
<name>RS18_CAMJ8</name>
<keyword id="KW-0687">Ribonucleoprotein</keyword>
<keyword id="KW-0689">Ribosomal protein</keyword>
<keyword id="KW-0694">RNA-binding</keyword>
<keyword id="KW-0699">rRNA-binding</keyword>
<feature type="chain" id="PRO_1000071898" description="Small ribosomal subunit protein bS18">
    <location>
        <begin position="1"/>
        <end position="86"/>
    </location>
</feature>
<organism>
    <name type="scientific">Campylobacter jejuni subsp. jejuni serotype O:6 (strain 81116 / NCTC 11828)</name>
    <dbReference type="NCBI Taxonomy" id="407148"/>
    <lineage>
        <taxon>Bacteria</taxon>
        <taxon>Pseudomonadati</taxon>
        <taxon>Campylobacterota</taxon>
        <taxon>Epsilonproteobacteria</taxon>
        <taxon>Campylobacterales</taxon>
        <taxon>Campylobacteraceae</taxon>
        <taxon>Campylobacter</taxon>
    </lineage>
</organism>
<reference key="1">
    <citation type="journal article" date="2007" name="J. Bacteriol.">
        <title>The complete genome sequence of Campylobacter jejuni strain 81116 (NCTC11828).</title>
        <authorList>
            <person name="Pearson B.M."/>
            <person name="Gaskin D.J.H."/>
            <person name="Segers R.P.A.M."/>
            <person name="Wells J.M."/>
            <person name="Nuijten P.J.M."/>
            <person name="van Vliet A.H.M."/>
        </authorList>
    </citation>
    <scope>NUCLEOTIDE SEQUENCE [LARGE SCALE GENOMIC DNA]</scope>
    <source>
        <strain>81116 / NCTC 11828</strain>
    </source>
</reference>
<gene>
    <name evidence="1" type="primary">rpsR</name>
    <name type="ordered locus">C8J_1013</name>
</gene>
<accession>A8FMC5</accession>
<evidence type="ECO:0000255" key="1">
    <source>
        <dbReference type="HAMAP-Rule" id="MF_00270"/>
    </source>
</evidence>
<evidence type="ECO:0000305" key="2"/>
<protein>
    <recommendedName>
        <fullName evidence="1">Small ribosomal subunit protein bS18</fullName>
    </recommendedName>
    <alternativeName>
        <fullName evidence="2">30S ribosomal protein S18</fullName>
    </alternativeName>
</protein>
<dbReference type="EMBL" id="CP000814">
    <property type="protein sequence ID" value="ABV52612.1"/>
    <property type="molecule type" value="Genomic_DNA"/>
</dbReference>
<dbReference type="RefSeq" id="WP_002853032.1">
    <property type="nucleotide sequence ID" value="NC_009839.1"/>
</dbReference>
<dbReference type="SMR" id="A8FMC5"/>
<dbReference type="KEGG" id="cju:C8J_1013"/>
<dbReference type="HOGENOM" id="CLU_148710_2_2_7"/>
<dbReference type="GO" id="GO:0022627">
    <property type="term" value="C:cytosolic small ribosomal subunit"/>
    <property type="evidence" value="ECO:0007669"/>
    <property type="project" value="TreeGrafter"/>
</dbReference>
<dbReference type="GO" id="GO:0070181">
    <property type="term" value="F:small ribosomal subunit rRNA binding"/>
    <property type="evidence" value="ECO:0007669"/>
    <property type="project" value="TreeGrafter"/>
</dbReference>
<dbReference type="GO" id="GO:0003735">
    <property type="term" value="F:structural constituent of ribosome"/>
    <property type="evidence" value="ECO:0007669"/>
    <property type="project" value="InterPro"/>
</dbReference>
<dbReference type="GO" id="GO:0006412">
    <property type="term" value="P:translation"/>
    <property type="evidence" value="ECO:0007669"/>
    <property type="project" value="UniProtKB-UniRule"/>
</dbReference>
<dbReference type="FunFam" id="4.10.640.10:FF:000005">
    <property type="entry name" value="30S ribosomal protein S18"/>
    <property type="match status" value="1"/>
</dbReference>
<dbReference type="Gene3D" id="4.10.640.10">
    <property type="entry name" value="Ribosomal protein S18"/>
    <property type="match status" value="1"/>
</dbReference>
<dbReference type="HAMAP" id="MF_00270">
    <property type="entry name" value="Ribosomal_bS18"/>
    <property type="match status" value="1"/>
</dbReference>
<dbReference type="InterPro" id="IPR001648">
    <property type="entry name" value="Ribosomal_bS18"/>
</dbReference>
<dbReference type="InterPro" id="IPR036870">
    <property type="entry name" value="Ribosomal_bS18_sf"/>
</dbReference>
<dbReference type="NCBIfam" id="TIGR00165">
    <property type="entry name" value="S18"/>
    <property type="match status" value="1"/>
</dbReference>
<dbReference type="PANTHER" id="PTHR13479">
    <property type="entry name" value="30S RIBOSOMAL PROTEIN S18"/>
    <property type="match status" value="1"/>
</dbReference>
<dbReference type="PANTHER" id="PTHR13479:SF40">
    <property type="entry name" value="SMALL RIBOSOMAL SUBUNIT PROTEIN BS18M"/>
    <property type="match status" value="1"/>
</dbReference>
<dbReference type="Pfam" id="PF01084">
    <property type="entry name" value="Ribosomal_S18"/>
    <property type="match status" value="1"/>
</dbReference>
<dbReference type="PRINTS" id="PR00974">
    <property type="entry name" value="RIBOSOMALS18"/>
</dbReference>
<dbReference type="SUPFAM" id="SSF46911">
    <property type="entry name" value="Ribosomal protein S18"/>
    <property type="match status" value="1"/>
</dbReference>
<proteinExistence type="inferred from homology"/>